<feature type="chain" id="PRO_0000272586" description="Phosphate import ATP-binding protein PstB">
    <location>
        <begin position="1"/>
        <end position="255"/>
    </location>
</feature>
<feature type="domain" description="ABC transporter" evidence="1">
    <location>
        <begin position="10"/>
        <end position="250"/>
    </location>
</feature>
<feature type="binding site" evidence="1">
    <location>
        <begin position="42"/>
        <end position="49"/>
    </location>
    <ligand>
        <name>ATP</name>
        <dbReference type="ChEBI" id="CHEBI:30616"/>
    </ligand>
</feature>
<keyword id="KW-0067">ATP-binding</keyword>
<keyword id="KW-1003">Cell membrane</keyword>
<keyword id="KW-0472">Membrane</keyword>
<keyword id="KW-0547">Nucleotide-binding</keyword>
<keyword id="KW-0592">Phosphate transport</keyword>
<keyword id="KW-1278">Translocase</keyword>
<keyword id="KW-0813">Transport</keyword>
<proteinExistence type="inferred from homology"/>
<reference key="1">
    <citation type="journal article" date="2009" name="ISME J.">
        <title>The genome sequence of the psychrophilic archaeon, Methanococcoides burtonii: the role of genome evolution in cold adaptation.</title>
        <authorList>
            <person name="Allen M.A."/>
            <person name="Lauro F.M."/>
            <person name="Williams T.J."/>
            <person name="Burg D."/>
            <person name="Siddiqui K.S."/>
            <person name="De Francisci D."/>
            <person name="Chong K.W."/>
            <person name="Pilak O."/>
            <person name="Chew H.H."/>
            <person name="De Maere M.Z."/>
            <person name="Ting L."/>
            <person name="Katrib M."/>
            <person name="Ng C."/>
            <person name="Sowers K.R."/>
            <person name="Galperin M.Y."/>
            <person name="Anderson I.J."/>
            <person name="Ivanova N."/>
            <person name="Dalin E."/>
            <person name="Martinez M."/>
            <person name="Lapidus A."/>
            <person name="Hauser L."/>
            <person name="Land M."/>
            <person name="Thomas T."/>
            <person name="Cavicchioli R."/>
        </authorList>
    </citation>
    <scope>NUCLEOTIDE SEQUENCE [LARGE SCALE GENOMIC DNA]</scope>
    <source>
        <strain>DSM 6242 / NBRC 107633 / OCM 468 / ACE-M</strain>
    </source>
</reference>
<organism>
    <name type="scientific">Methanococcoides burtonii (strain DSM 6242 / NBRC 107633 / OCM 468 / ACE-M)</name>
    <dbReference type="NCBI Taxonomy" id="259564"/>
    <lineage>
        <taxon>Archaea</taxon>
        <taxon>Methanobacteriati</taxon>
        <taxon>Methanobacteriota</taxon>
        <taxon>Stenosarchaea group</taxon>
        <taxon>Methanomicrobia</taxon>
        <taxon>Methanosarcinales</taxon>
        <taxon>Methanosarcinaceae</taxon>
        <taxon>Methanococcoides</taxon>
    </lineage>
</organism>
<gene>
    <name evidence="1" type="primary">pstB</name>
    <name type="ordered locus">Mbur_0749</name>
</gene>
<comment type="function">
    <text evidence="1">Part of the ABC transporter complex PstSACB involved in phosphate import. Responsible for energy coupling to the transport system.</text>
</comment>
<comment type="catalytic activity">
    <reaction evidence="1">
        <text>phosphate(out) + ATP + H2O = ADP + 2 phosphate(in) + H(+)</text>
        <dbReference type="Rhea" id="RHEA:24440"/>
        <dbReference type="ChEBI" id="CHEBI:15377"/>
        <dbReference type="ChEBI" id="CHEBI:15378"/>
        <dbReference type="ChEBI" id="CHEBI:30616"/>
        <dbReference type="ChEBI" id="CHEBI:43474"/>
        <dbReference type="ChEBI" id="CHEBI:456216"/>
        <dbReference type="EC" id="7.3.2.1"/>
    </reaction>
</comment>
<comment type="subunit">
    <text evidence="1">The complex is composed of two ATP-binding proteins (PstB), two transmembrane proteins (PstC and PstA) and a solute-binding protein (PstS).</text>
</comment>
<comment type="subcellular location">
    <subcellularLocation>
        <location evidence="1">Cell membrane</location>
        <topology evidence="1">Peripheral membrane protein</topology>
    </subcellularLocation>
</comment>
<comment type="similarity">
    <text evidence="1">Belongs to the ABC transporter superfamily. Phosphate importer (TC 3.A.1.7) family.</text>
</comment>
<dbReference type="EC" id="7.3.2.1" evidence="1"/>
<dbReference type="EMBL" id="CP000300">
    <property type="protein sequence ID" value="ABE51710.1"/>
    <property type="molecule type" value="Genomic_DNA"/>
</dbReference>
<dbReference type="RefSeq" id="WP_011498866.1">
    <property type="nucleotide sequence ID" value="NC_007955.1"/>
</dbReference>
<dbReference type="SMR" id="Q12XW6"/>
<dbReference type="STRING" id="259564.Mbur_0749"/>
<dbReference type="GeneID" id="3996653"/>
<dbReference type="KEGG" id="mbu:Mbur_0749"/>
<dbReference type="HOGENOM" id="CLU_000604_1_22_2"/>
<dbReference type="OrthoDB" id="31298at2157"/>
<dbReference type="Proteomes" id="UP000001979">
    <property type="component" value="Chromosome"/>
</dbReference>
<dbReference type="GO" id="GO:0005886">
    <property type="term" value="C:plasma membrane"/>
    <property type="evidence" value="ECO:0007669"/>
    <property type="project" value="UniProtKB-SubCell"/>
</dbReference>
<dbReference type="GO" id="GO:0005524">
    <property type="term" value="F:ATP binding"/>
    <property type="evidence" value="ECO:0007669"/>
    <property type="project" value="UniProtKB-KW"/>
</dbReference>
<dbReference type="GO" id="GO:0016887">
    <property type="term" value="F:ATP hydrolysis activity"/>
    <property type="evidence" value="ECO:0007669"/>
    <property type="project" value="InterPro"/>
</dbReference>
<dbReference type="GO" id="GO:0015415">
    <property type="term" value="F:ATPase-coupled phosphate ion transmembrane transporter activity"/>
    <property type="evidence" value="ECO:0007669"/>
    <property type="project" value="UniProtKB-EC"/>
</dbReference>
<dbReference type="GO" id="GO:0035435">
    <property type="term" value="P:phosphate ion transmembrane transport"/>
    <property type="evidence" value="ECO:0007669"/>
    <property type="project" value="InterPro"/>
</dbReference>
<dbReference type="CDD" id="cd03260">
    <property type="entry name" value="ABC_PstB_phosphate_transporter"/>
    <property type="match status" value="1"/>
</dbReference>
<dbReference type="FunFam" id="3.40.50.300:FF:000132">
    <property type="entry name" value="Phosphate import ATP-binding protein PstB"/>
    <property type="match status" value="1"/>
</dbReference>
<dbReference type="Gene3D" id="3.40.50.300">
    <property type="entry name" value="P-loop containing nucleotide triphosphate hydrolases"/>
    <property type="match status" value="1"/>
</dbReference>
<dbReference type="InterPro" id="IPR003593">
    <property type="entry name" value="AAA+_ATPase"/>
</dbReference>
<dbReference type="InterPro" id="IPR003439">
    <property type="entry name" value="ABC_transporter-like_ATP-bd"/>
</dbReference>
<dbReference type="InterPro" id="IPR017871">
    <property type="entry name" value="ABC_transporter-like_CS"/>
</dbReference>
<dbReference type="InterPro" id="IPR027417">
    <property type="entry name" value="P-loop_NTPase"/>
</dbReference>
<dbReference type="InterPro" id="IPR005670">
    <property type="entry name" value="PstB-like"/>
</dbReference>
<dbReference type="NCBIfam" id="TIGR00972">
    <property type="entry name" value="3a0107s01c2"/>
    <property type="match status" value="1"/>
</dbReference>
<dbReference type="PANTHER" id="PTHR43423">
    <property type="entry name" value="ABC TRANSPORTER I FAMILY MEMBER 17"/>
    <property type="match status" value="1"/>
</dbReference>
<dbReference type="PANTHER" id="PTHR43423:SF1">
    <property type="entry name" value="ABC TRANSPORTER I FAMILY MEMBER 17"/>
    <property type="match status" value="1"/>
</dbReference>
<dbReference type="Pfam" id="PF00005">
    <property type="entry name" value="ABC_tran"/>
    <property type="match status" value="1"/>
</dbReference>
<dbReference type="SMART" id="SM00382">
    <property type="entry name" value="AAA"/>
    <property type="match status" value="1"/>
</dbReference>
<dbReference type="SUPFAM" id="SSF52540">
    <property type="entry name" value="P-loop containing nucleoside triphosphate hydrolases"/>
    <property type="match status" value="1"/>
</dbReference>
<dbReference type="PROSITE" id="PS00211">
    <property type="entry name" value="ABC_TRANSPORTER_1"/>
    <property type="match status" value="1"/>
</dbReference>
<dbReference type="PROSITE" id="PS50893">
    <property type="entry name" value="ABC_TRANSPORTER_2"/>
    <property type="match status" value="1"/>
</dbReference>
<dbReference type="PROSITE" id="PS51238">
    <property type="entry name" value="PSTB"/>
    <property type="match status" value="1"/>
</dbReference>
<protein>
    <recommendedName>
        <fullName evidence="1">Phosphate import ATP-binding protein PstB</fullName>
        <ecNumber evidence="1">7.3.2.1</ecNumber>
    </recommendedName>
    <alternativeName>
        <fullName evidence="1">ABC phosphate transporter</fullName>
    </alternativeName>
    <alternativeName>
        <fullName evidence="1">Phosphate-transporting ATPase</fullName>
    </alternativeName>
</protein>
<evidence type="ECO:0000255" key="1">
    <source>
        <dbReference type="HAMAP-Rule" id="MF_01702"/>
    </source>
</evidence>
<name>PSTB_METBU</name>
<accession>Q12XW6</accession>
<sequence length="255" mass="28537">MSKNEINTNINIKDLNLWYGEKHALKDISLDIPEKSVTALIGPSGCGKSTFLRCLNRMNDLVKSCSIEGEVLVDGENIYDKDVDVVDLRKNVGMVFQKPNPFPMSIYDNIAYGPKIHGCSKSETEERVHKALDDAALMGEVQDRLGDQAFSLSGGQQQRLCIARTLAVKPEILLFDEPCSALDPISTSKIEDLILELKKDYTIVIVTHNMQQAARISDHTAFFLHGEIIEFGKTKHIFEDPQMKSTEDYITGRFG</sequence>